<dbReference type="EMBL" id="AE000783">
    <property type="protein sequence ID" value="AAC66404.1"/>
    <property type="molecule type" value="Genomic_DNA"/>
</dbReference>
<dbReference type="PIR" id="G70100">
    <property type="entry name" value="G70100"/>
</dbReference>
<dbReference type="RefSeq" id="NP_212141.1">
    <property type="nucleotide sequence ID" value="NC_001318.1"/>
</dbReference>
<dbReference type="RefSeq" id="WP_002658378.1">
    <property type="nucleotide sequence ID" value="NC_001318.1"/>
</dbReference>
<dbReference type="STRING" id="224326.BB_0007"/>
<dbReference type="PaxDb" id="224326-BB_0007"/>
<dbReference type="EnsemblBacteria" id="AAC66404">
    <property type="protein sequence ID" value="AAC66404"/>
    <property type="gene ID" value="BB_0007"/>
</dbReference>
<dbReference type="KEGG" id="bbu:BB_0007"/>
<dbReference type="PATRIC" id="fig|224326.49.peg.405"/>
<dbReference type="HOGENOM" id="CLU_061567_1_0_12"/>
<dbReference type="OrthoDB" id="9785423at2"/>
<dbReference type="Proteomes" id="UP000001807">
    <property type="component" value="Chromosome"/>
</dbReference>
<dbReference type="Gene3D" id="3.40.50.1000">
    <property type="entry name" value="HAD superfamily/HAD-like"/>
    <property type="match status" value="1"/>
</dbReference>
<dbReference type="InterPro" id="IPR036412">
    <property type="entry name" value="HAD-like_sf"/>
</dbReference>
<dbReference type="InterPro" id="IPR023214">
    <property type="entry name" value="HAD_sf"/>
</dbReference>
<dbReference type="SUPFAM" id="SSF56784">
    <property type="entry name" value="HAD-like"/>
    <property type="match status" value="1"/>
</dbReference>
<proteinExistence type="predicted"/>
<organism>
    <name type="scientific">Borreliella burgdorferi (strain ATCC 35210 / DSM 4680 / CIP 102532 / B31)</name>
    <name type="common">Borrelia burgdorferi</name>
    <dbReference type="NCBI Taxonomy" id="224326"/>
    <lineage>
        <taxon>Bacteria</taxon>
        <taxon>Pseudomonadati</taxon>
        <taxon>Spirochaetota</taxon>
        <taxon>Spirochaetia</taxon>
        <taxon>Spirochaetales</taxon>
        <taxon>Borreliaceae</taxon>
        <taxon>Borreliella</taxon>
    </lineage>
</organism>
<reference key="1">
    <citation type="journal article" date="1997" name="Nature">
        <title>Genomic sequence of a Lyme disease spirochaete, Borrelia burgdorferi.</title>
        <authorList>
            <person name="Fraser C.M."/>
            <person name="Casjens S."/>
            <person name="Huang W.M."/>
            <person name="Sutton G.G."/>
            <person name="Clayton R.A."/>
            <person name="Lathigra R."/>
            <person name="White O."/>
            <person name="Ketchum K.A."/>
            <person name="Dodson R.J."/>
            <person name="Hickey E.K."/>
            <person name="Gwinn M.L."/>
            <person name="Dougherty B.A."/>
            <person name="Tomb J.-F."/>
            <person name="Fleischmann R.D."/>
            <person name="Richardson D.L."/>
            <person name="Peterson J.D."/>
            <person name="Kerlavage A.R."/>
            <person name="Quackenbush J."/>
            <person name="Salzberg S.L."/>
            <person name="Hanson M."/>
            <person name="van Vugt R."/>
            <person name="Palmer N."/>
            <person name="Adams M.D."/>
            <person name="Gocayne J.D."/>
            <person name="Weidman J.F."/>
            <person name="Utterback T.R."/>
            <person name="Watthey L."/>
            <person name="McDonald L.A."/>
            <person name="Artiach P."/>
            <person name="Bowman C."/>
            <person name="Garland S.A."/>
            <person name="Fujii C."/>
            <person name="Cotton M.D."/>
            <person name="Horst K."/>
            <person name="Roberts K.M."/>
            <person name="Hatch B."/>
            <person name="Smith H.O."/>
            <person name="Venter J.C."/>
        </authorList>
    </citation>
    <scope>NUCLEOTIDE SEQUENCE [LARGE SCALE GENOMIC DNA]</scope>
    <source>
        <strain>ATCC 35210 / DSM 4680 / CIP 102532 / B31</strain>
    </source>
</reference>
<keyword id="KW-1185">Reference proteome</keyword>
<name>Y007_BORBU</name>
<gene>
    <name type="ordered locus">BB_0007</name>
</gene>
<feature type="chain" id="PRO_0000174363" description="Uncharacterized protein BB_0007">
    <location>
        <begin position="1"/>
        <end position="285"/>
    </location>
</feature>
<accession>O51040</accession>
<sequence length="285" mass="33538">MNERENIIALIFDFDNTLIYGNMQQVLFDEYCVDSCSFWREVEGLEYVYKQNGYNIISNEMIYLSHFLTYVREGFFESLDNRALFNLGAKLRFFEGVIGLFDEISEINKKLENSKSQIKIYIVSSGFRQMILGSKIAPYVSKVWACEFIDSYLMPFYELRDDKFSKNKILSSVCYFVDHTIKTRVIFEINKGSYEKINERVPKSKRQIPFKNIFYIADGFSDVPAFEILNNILKHCRNTLTVYHGNDKNAKKLFYENRVGDFAEANYTKGTKLYNWIMEKICLSV</sequence>
<protein>
    <recommendedName>
        <fullName>Uncharacterized protein BB_0007</fullName>
    </recommendedName>
</protein>